<feature type="chain" id="PRO_0000145877" description="Phosphoglycerate kinase">
    <location>
        <begin position="1"/>
        <end position="416"/>
    </location>
</feature>
<feature type="binding site" evidence="3">
    <location>
        <position position="23"/>
    </location>
    <ligand>
        <name>(2R)-3-phosphoglycerate</name>
        <dbReference type="ChEBI" id="CHEBI:58272"/>
    </ligand>
</feature>
<feature type="binding site" evidence="5">
    <location>
        <position position="24"/>
    </location>
    <ligand>
        <name>(2R)-3-phosphoglycerate</name>
        <dbReference type="ChEBI" id="CHEBI:58272"/>
    </ligand>
</feature>
<feature type="binding site" evidence="3">
    <location>
        <position position="25"/>
    </location>
    <ligand>
        <name>(2R)-3-phosphoglycerate</name>
        <dbReference type="ChEBI" id="CHEBI:58272"/>
    </ligand>
</feature>
<feature type="binding site" evidence="5">
    <location>
        <position position="26"/>
    </location>
    <ligand>
        <name>(2R)-3-phosphoglycerate</name>
        <dbReference type="ChEBI" id="CHEBI:58272"/>
    </ligand>
</feature>
<feature type="binding site" evidence="3">
    <location>
        <position position="38"/>
    </location>
    <ligand>
        <name>(2R)-3-phosphoglycerate</name>
        <dbReference type="ChEBI" id="CHEBI:58272"/>
    </ligand>
</feature>
<feature type="binding site" evidence="5">
    <location>
        <position position="39"/>
    </location>
    <ligand>
        <name>(2R)-3-phosphoglycerate</name>
        <dbReference type="ChEBI" id="CHEBI:58272"/>
    </ligand>
</feature>
<feature type="binding site" evidence="3">
    <location>
        <position position="62"/>
    </location>
    <ligand>
        <name>(2R)-3-phosphoglycerate</name>
        <dbReference type="ChEBI" id="CHEBI:58272"/>
    </ligand>
</feature>
<feature type="binding site" evidence="5">
    <location>
        <position position="63"/>
    </location>
    <ligand>
        <name>(2R)-3-phosphoglycerate</name>
        <dbReference type="ChEBI" id="CHEBI:58272"/>
    </ligand>
</feature>
<feature type="binding site" evidence="3">
    <location>
        <position position="65"/>
    </location>
    <ligand>
        <name>(2R)-3-phosphoglycerate</name>
        <dbReference type="ChEBI" id="CHEBI:58272"/>
    </ligand>
</feature>
<feature type="binding site" evidence="5">
    <location>
        <position position="66"/>
    </location>
    <ligand>
        <name>(2R)-3-phosphoglycerate</name>
        <dbReference type="ChEBI" id="CHEBI:58272"/>
    </ligand>
</feature>
<feature type="binding site" evidence="3">
    <location>
        <position position="121"/>
    </location>
    <ligand>
        <name>(2R)-3-phosphoglycerate</name>
        <dbReference type="ChEBI" id="CHEBI:58272"/>
    </ligand>
</feature>
<feature type="binding site" evidence="5">
    <location>
        <position position="122"/>
    </location>
    <ligand>
        <name>(2R)-3-phosphoglycerate</name>
        <dbReference type="ChEBI" id="CHEBI:58272"/>
    </ligand>
</feature>
<feature type="binding site" evidence="3">
    <location>
        <position position="168"/>
    </location>
    <ligand>
        <name>(2R)-3-phosphoglycerate</name>
        <dbReference type="ChEBI" id="CHEBI:58272"/>
    </ligand>
</feature>
<feature type="binding site" evidence="5">
    <location>
        <position position="169"/>
    </location>
    <ligand>
        <name>(2R)-3-phosphoglycerate</name>
        <dbReference type="ChEBI" id="CHEBI:58272"/>
    </ligand>
</feature>
<feature type="binding site" evidence="3">
    <location>
        <position position="212"/>
    </location>
    <ligand>
        <name>ADP</name>
        <dbReference type="ChEBI" id="CHEBI:456216"/>
    </ligand>
</feature>
<feature type="binding site" evidence="3">
    <location>
        <position position="212"/>
    </location>
    <ligand>
        <name>CDP</name>
        <dbReference type="ChEBI" id="CHEBI:58069"/>
    </ligand>
</feature>
<feature type="binding site" evidence="5">
    <location>
        <position position="213"/>
    </location>
    <ligand>
        <name>AMP</name>
        <dbReference type="ChEBI" id="CHEBI:456215"/>
    </ligand>
</feature>
<feature type="binding site" evidence="5">
    <location>
        <position position="213"/>
    </location>
    <ligand>
        <name>ATP</name>
        <dbReference type="ChEBI" id="CHEBI:30616"/>
    </ligand>
</feature>
<feature type="binding site" evidence="3">
    <location>
        <position position="213"/>
    </location>
    <ligand>
        <name>Mg(2+)</name>
        <dbReference type="ChEBI" id="CHEBI:18420"/>
    </ligand>
</feature>
<feature type="binding site" evidence="5">
    <location>
        <position position="214"/>
    </location>
    <ligand>
        <name>AMP</name>
        <dbReference type="ChEBI" id="CHEBI:456215"/>
    </ligand>
</feature>
<feature type="binding site" evidence="3">
    <location>
        <position position="216"/>
    </location>
    <ligand>
        <name>Mg(2+)</name>
        <dbReference type="ChEBI" id="CHEBI:18420"/>
    </ligand>
</feature>
<feature type="binding site" evidence="3">
    <location>
        <position position="217"/>
    </location>
    <ligand>
        <name>CDP</name>
        <dbReference type="ChEBI" id="CHEBI:58069"/>
    </ligand>
</feature>
<feature type="binding site" evidence="3">
    <location>
        <position position="217"/>
    </location>
    <ligand>
        <name>Mg(2+)</name>
        <dbReference type="ChEBI" id="CHEBI:18420"/>
    </ligand>
</feature>
<feature type="binding site" evidence="5">
    <location>
        <position position="218"/>
    </location>
    <ligand>
        <name>AMP</name>
        <dbReference type="ChEBI" id="CHEBI:456215"/>
    </ligand>
</feature>
<feature type="binding site" evidence="5">
    <location>
        <position position="218"/>
    </location>
    <ligand>
        <name>ATP</name>
        <dbReference type="ChEBI" id="CHEBI:30616"/>
    </ligand>
</feature>
<feature type="binding site" evidence="3">
    <location>
        <position position="236"/>
    </location>
    <ligand>
        <name>ADP</name>
        <dbReference type="ChEBI" id="CHEBI:456216"/>
    </ligand>
</feature>
<feature type="binding site" evidence="3">
    <location>
        <position position="236"/>
    </location>
    <ligand>
        <name>CDP</name>
        <dbReference type="ChEBI" id="CHEBI:58069"/>
    </ligand>
</feature>
<feature type="binding site" evidence="5">
    <location>
        <position position="237"/>
    </location>
    <ligand>
        <name>AMP</name>
        <dbReference type="ChEBI" id="CHEBI:456215"/>
    </ligand>
</feature>
<feature type="binding site" evidence="5">
    <location>
        <position position="237"/>
    </location>
    <ligand>
        <name>ATP</name>
        <dbReference type="ChEBI" id="CHEBI:30616"/>
    </ligand>
</feature>
<feature type="binding site" evidence="5">
    <location>
        <position position="311"/>
    </location>
    <ligand>
        <name>AMP</name>
        <dbReference type="ChEBI" id="CHEBI:456215"/>
    </ligand>
</feature>
<feature type="binding site" evidence="5">
    <location>
        <position position="311"/>
    </location>
    <ligand>
        <name>ATP</name>
        <dbReference type="ChEBI" id="CHEBI:30616"/>
    </ligand>
</feature>
<feature type="binding site" evidence="3">
    <location>
        <position position="336"/>
    </location>
    <ligand>
        <name>CDP</name>
        <dbReference type="ChEBI" id="CHEBI:58069"/>
    </ligand>
</feature>
<feature type="binding site" evidence="3">
    <location>
        <position position="341"/>
    </location>
    <ligand>
        <name>ADP</name>
        <dbReference type="ChEBI" id="CHEBI:456216"/>
    </ligand>
</feature>
<feature type="binding site" evidence="3">
    <location>
        <position position="341"/>
    </location>
    <ligand>
        <name>CDP</name>
        <dbReference type="ChEBI" id="CHEBI:58069"/>
    </ligand>
</feature>
<feature type="binding site" evidence="5">
    <location>
        <position position="342"/>
    </location>
    <ligand>
        <name>AMP</name>
        <dbReference type="ChEBI" id="CHEBI:456215"/>
    </ligand>
</feature>
<feature type="binding site" evidence="5">
    <location>
        <position position="342"/>
    </location>
    <ligand>
        <name>ATP</name>
        <dbReference type="ChEBI" id="CHEBI:30616"/>
    </ligand>
</feature>
<feature type="binding site" evidence="5">
    <location>
        <position position="373"/>
    </location>
    <ligand>
        <name>ATP</name>
        <dbReference type="ChEBI" id="CHEBI:30616"/>
    </ligand>
</feature>
<feature type="binding site" evidence="5">
    <location>
        <position position="373"/>
    </location>
    <ligand>
        <name>Mg(2+)</name>
        <dbReference type="ChEBI" id="CHEBI:18420"/>
    </ligand>
</feature>
<feature type="binding site" evidence="5">
    <location>
        <position position="374"/>
    </location>
    <ligand>
        <name>ATP</name>
        <dbReference type="ChEBI" id="CHEBI:30616"/>
    </ligand>
</feature>
<comment type="function">
    <text evidence="2 3 4">Catalyzes one of the two ATP producing reactions in the glycolytic pathway via the reversible conversion of 1,3-diphosphoglycerate to 3-phosphoglycerate (By similarity). Both L- and D- forms of purine and pyrimidine nucleotides can be used as substrates, but the activity is much lower on pyrimidines (By similarity). Negatively regulates the biosynthesis of acetyl-CoA from pyruvate in the mitochondrion (By similarity).</text>
</comment>
<comment type="catalytic activity">
    <reaction evidence="4">
        <text>(2R)-3-phosphoglycerate + ATP = (2R)-3-phospho-glyceroyl phosphate + ADP</text>
        <dbReference type="Rhea" id="RHEA:14801"/>
        <dbReference type="ChEBI" id="CHEBI:30616"/>
        <dbReference type="ChEBI" id="CHEBI:57604"/>
        <dbReference type="ChEBI" id="CHEBI:58272"/>
        <dbReference type="ChEBI" id="CHEBI:456216"/>
        <dbReference type="EC" id="2.7.2.3"/>
    </reaction>
</comment>
<comment type="cofactor">
    <cofactor evidence="3">
        <name>Mg(2+)</name>
        <dbReference type="ChEBI" id="CHEBI:18420"/>
    </cofactor>
</comment>
<comment type="pathway">
    <text evidence="4">Carbohydrate degradation; glycolysis; pyruvate from D-glyceraldehyde 3-phosphate: step 2/5.</text>
</comment>
<comment type="subunit">
    <text evidence="1">Monomer.</text>
</comment>
<comment type="subcellular location">
    <subcellularLocation>
        <location evidence="4">Cytoplasm</location>
    </subcellularLocation>
    <subcellularLocation>
        <location evidence="4">Mitochondrion</location>
    </subcellularLocation>
</comment>
<comment type="similarity">
    <text evidence="6">Belongs to the phosphoglycerate kinase family.</text>
</comment>
<evidence type="ECO:0000250" key="1"/>
<evidence type="ECO:0000250" key="2">
    <source>
        <dbReference type="UniProtKB" id="A0A7G5KET3"/>
    </source>
</evidence>
<evidence type="ECO:0000250" key="3">
    <source>
        <dbReference type="UniProtKB" id="P00558"/>
    </source>
</evidence>
<evidence type="ECO:0000250" key="4">
    <source>
        <dbReference type="UniProtKB" id="P00560"/>
    </source>
</evidence>
<evidence type="ECO:0000250" key="5">
    <source>
        <dbReference type="UniProtKB" id="Q7SIB7"/>
    </source>
</evidence>
<evidence type="ECO:0000305" key="6"/>
<name>PGK_CANGA</name>
<sequence>MSLSSKLTVQDLELKDKRVFIRVDFNVPLDGKKITSNQRIVAALPTIKYVLEHNPRYVVLASHLGRPNGERNEKYSLAPVAEELQSLLGKPVTFLNDCVGSEVDSAVKASAPGSVILLENLRYHIEEEGSRKVDGQKVKASAEDVAKFRKELCSLADVYINDAFGTAHRAHSSMVGFDLPQRAAGFLLTKELQYFGKALENPTRPFLAILGGAKVADKIQLIDNLLDKVDSIIIGGGMAFTFKKVLENAEIGDSIFDKAGAEIVPKLMEKAKAKGVEVVLPVDFVIADAFSADANTKIVSDKEGIPAGWQGLDNGPESRKLFAATIAKAKTIVWNGPPGVFEFEKFASGTKAMLDEVVKSSTSGNTVIIGGGDTATVAKKYGVTDKISHVSTGGGASLELLEGKELPGVAFLSEKN</sequence>
<reference key="1">
    <citation type="journal article" date="2004" name="Nature">
        <title>Genome evolution in yeasts.</title>
        <authorList>
            <person name="Dujon B."/>
            <person name="Sherman D."/>
            <person name="Fischer G."/>
            <person name="Durrens P."/>
            <person name="Casaregola S."/>
            <person name="Lafontaine I."/>
            <person name="de Montigny J."/>
            <person name="Marck C."/>
            <person name="Neuveglise C."/>
            <person name="Talla E."/>
            <person name="Goffard N."/>
            <person name="Frangeul L."/>
            <person name="Aigle M."/>
            <person name="Anthouard V."/>
            <person name="Babour A."/>
            <person name="Barbe V."/>
            <person name="Barnay S."/>
            <person name="Blanchin S."/>
            <person name="Beckerich J.-M."/>
            <person name="Beyne E."/>
            <person name="Bleykasten C."/>
            <person name="Boisrame A."/>
            <person name="Boyer J."/>
            <person name="Cattolico L."/>
            <person name="Confanioleri F."/>
            <person name="de Daruvar A."/>
            <person name="Despons L."/>
            <person name="Fabre E."/>
            <person name="Fairhead C."/>
            <person name="Ferry-Dumazet H."/>
            <person name="Groppi A."/>
            <person name="Hantraye F."/>
            <person name="Hennequin C."/>
            <person name="Jauniaux N."/>
            <person name="Joyet P."/>
            <person name="Kachouri R."/>
            <person name="Kerrest A."/>
            <person name="Koszul R."/>
            <person name="Lemaire M."/>
            <person name="Lesur I."/>
            <person name="Ma L."/>
            <person name="Muller H."/>
            <person name="Nicaud J.-M."/>
            <person name="Nikolski M."/>
            <person name="Oztas S."/>
            <person name="Ozier-Kalogeropoulos O."/>
            <person name="Pellenz S."/>
            <person name="Potier S."/>
            <person name="Richard G.-F."/>
            <person name="Straub M.-L."/>
            <person name="Suleau A."/>
            <person name="Swennen D."/>
            <person name="Tekaia F."/>
            <person name="Wesolowski-Louvel M."/>
            <person name="Westhof E."/>
            <person name="Wirth B."/>
            <person name="Zeniou-Meyer M."/>
            <person name="Zivanovic Y."/>
            <person name="Bolotin-Fukuhara M."/>
            <person name="Thierry A."/>
            <person name="Bouchier C."/>
            <person name="Caudron B."/>
            <person name="Scarpelli C."/>
            <person name="Gaillardin C."/>
            <person name="Weissenbach J."/>
            <person name="Wincker P."/>
            <person name="Souciet J.-L."/>
        </authorList>
    </citation>
    <scope>NUCLEOTIDE SEQUENCE [LARGE SCALE GENOMIC DNA]</scope>
    <source>
        <strain>ATCC 2001 / BCRC 20586 / JCM 3761 / NBRC 0622 / NRRL Y-65 / CBS 138</strain>
    </source>
</reference>
<gene>
    <name type="primary">PGK1</name>
    <name type="ordered locus">CAGL0L07722g</name>
</gene>
<protein>
    <recommendedName>
        <fullName>Phosphoglycerate kinase</fullName>
        <ecNumber evidence="4">2.7.2.3</ecNumber>
    </recommendedName>
</protein>
<keyword id="KW-0067">ATP-binding</keyword>
<keyword id="KW-0963">Cytoplasm</keyword>
<keyword id="KW-0324">Glycolysis</keyword>
<keyword id="KW-0418">Kinase</keyword>
<keyword id="KW-0460">Magnesium</keyword>
<keyword id="KW-0479">Metal-binding</keyword>
<keyword id="KW-0496">Mitochondrion</keyword>
<keyword id="KW-0547">Nucleotide-binding</keyword>
<keyword id="KW-1185">Reference proteome</keyword>
<keyword id="KW-0808">Transferase</keyword>
<accession>Q6FKY1</accession>
<organism>
    <name type="scientific">Candida glabrata (strain ATCC 2001 / BCRC 20586 / JCM 3761 / NBRC 0622 / NRRL Y-65 / CBS 138)</name>
    <name type="common">Yeast</name>
    <name type="synonym">Nakaseomyces glabratus</name>
    <dbReference type="NCBI Taxonomy" id="284593"/>
    <lineage>
        <taxon>Eukaryota</taxon>
        <taxon>Fungi</taxon>
        <taxon>Dikarya</taxon>
        <taxon>Ascomycota</taxon>
        <taxon>Saccharomycotina</taxon>
        <taxon>Saccharomycetes</taxon>
        <taxon>Saccharomycetales</taxon>
        <taxon>Saccharomycetaceae</taxon>
        <taxon>Nakaseomyces</taxon>
    </lineage>
</organism>
<dbReference type="EC" id="2.7.2.3" evidence="4"/>
<dbReference type="EMBL" id="CR380958">
    <property type="protein sequence ID" value="CAG62083.1"/>
    <property type="molecule type" value="Genomic_DNA"/>
</dbReference>
<dbReference type="RefSeq" id="XP_449113.1">
    <property type="nucleotide sequence ID" value="XM_449113.1"/>
</dbReference>
<dbReference type="SMR" id="Q6FKY1"/>
<dbReference type="FunCoup" id="Q6FKY1">
    <property type="interactions" value="858"/>
</dbReference>
<dbReference type="STRING" id="284593.Q6FKY1"/>
<dbReference type="EnsemblFungi" id="CAGL0L07722g-T">
    <property type="protein sequence ID" value="CAGL0L07722g-T-p1"/>
    <property type="gene ID" value="CAGL0L07722g"/>
</dbReference>
<dbReference type="GeneID" id="2891002"/>
<dbReference type="KEGG" id="cgr:2891002"/>
<dbReference type="CGD" id="CAL0135168">
    <property type="gene designation" value="PGK1"/>
</dbReference>
<dbReference type="VEuPathDB" id="FungiDB:B1J91_L07722g"/>
<dbReference type="VEuPathDB" id="FungiDB:CAGL0L07722g"/>
<dbReference type="eggNOG" id="KOG1367">
    <property type="taxonomic scope" value="Eukaryota"/>
</dbReference>
<dbReference type="HOGENOM" id="CLU_025427_0_2_1"/>
<dbReference type="InParanoid" id="Q6FKY1"/>
<dbReference type="OMA" id="DMIFDIG"/>
<dbReference type="UniPathway" id="UPA00109">
    <property type="reaction ID" value="UER00185"/>
</dbReference>
<dbReference type="Proteomes" id="UP000002428">
    <property type="component" value="Chromosome L"/>
</dbReference>
<dbReference type="GO" id="GO:0009986">
    <property type="term" value="C:cell surface"/>
    <property type="evidence" value="ECO:0000314"/>
    <property type="project" value="CGD"/>
</dbReference>
<dbReference type="GO" id="GO:0005829">
    <property type="term" value="C:cytosol"/>
    <property type="evidence" value="ECO:0000314"/>
    <property type="project" value="CGD"/>
</dbReference>
<dbReference type="GO" id="GO:0005576">
    <property type="term" value="C:extracellular region"/>
    <property type="evidence" value="ECO:0000314"/>
    <property type="project" value="CGD"/>
</dbReference>
<dbReference type="GO" id="GO:0062040">
    <property type="term" value="C:fungal biofilm matrix"/>
    <property type="evidence" value="ECO:0000314"/>
    <property type="project" value="CGD"/>
</dbReference>
<dbReference type="GO" id="GO:0005739">
    <property type="term" value="C:mitochondrion"/>
    <property type="evidence" value="ECO:0007669"/>
    <property type="project" value="UniProtKB-SubCell"/>
</dbReference>
<dbReference type="GO" id="GO:0043531">
    <property type="term" value="F:ADP binding"/>
    <property type="evidence" value="ECO:0007669"/>
    <property type="project" value="TreeGrafter"/>
</dbReference>
<dbReference type="GO" id="GO:0005524">
    <property type="term" value="F:ATP binding"/>
    <property type="evidence" value="ECO:0007669"/>
    <property type="project" value="UniProtKB-KW"/>
</dbReference>
<dbReference type="GO" id="GO:0046872">
    <property type="term" value="F:metal ion binding"/>
    <property type="evidence" value="ECO:0007669"/>
    <property type="project" value="UniProtKB-KW"/>
</dbReference>
<dbReference type="GO" id="GO:0004618">
    <property type="term" value="F:phosphoglycerate kinase activity"/>
    <property type="evidence" value="ECO:0007669"/>
    <property type="project" value="UniProtKB-EC"/>
</dbReference>
<dbReference type="GO" id="GO:0006094">
    <property type="term" value="P:gluconeogenesis"/>
    <property type="evidence" value="ECO:0007669"/>
    <property type="project" value="EnsemblFungi"/>
</dbReference>
<dbReference type="GO" id="GO:0006096">
    <property type="term" value="P:glycolytic process"/>
    <property type="evidence" value="ECO:0007669"/>
    <property type="project" value="UniProtKB-UniPathway"/>
</dbReference>
<dbReference type="CDD" id="cd00318">
    <property type="entry name" value="Phosphoglycerate_kinase"/>
    <property type="match status" value="1"/>
</dbReference>
<dbReference type="FunFam" id="3.40.50.1260:FF:000003">
    <property type="entry name" value="Phosphoglycerate kinase"/>
    <property type="match status" value="1"/>
</dbReference>
<dbReference type="FunFam" id="3.40.50.1260:FF:000019">
    <property type="entry name" value="Phosphoglycerate kinase 1"/>
    <property type="match status" value="1"/>
</dbReference>
<dbReference type="Gene3D" id="3.40.50.1260">
    <property type="entry name" value="Phosphoglycerate kinase, N-terminal domain"/>
    <property type="match status" value="3"/>
</dbReference>
<dbReference type="HAMAP" id="MF_00145">
    <property type="entry name" value="Phosphoglyc_kinase"/>
    <property type="match status" value="1"/>
</dbReference>
<dbReference type="InterPro" id="IPR001576">
    <property type="entry name" value="Phosphoglycerate_kinase"/>
</dbReference>
<dbReference type="InterPro" id="IPR015911">
    <property type="entry name" value="Phosphoglycerate_kinase_CS"/>
</dbReference>
<dbReference type="InterPro" id="IPR015824">
    <property type="entry name" value="Phosphoglycerate_kinase_N"/>
</dbReference>
<dbReference type="InterPro" id="IPR036043">
    <property type="entry name" value="Phosphoglycerate_kinase_sf"/>
</dbReference>
<dbReference type="PANTHER" id="PTHR11406">
    <property type="entry name" value="PHOSPHOGLYCERATE KINASE"/>
    <property type="match status" value="1"/>
</dbReference>
<dbReference type="PANTHER" id="PTHR11406:SF0">
    <property type="entry name" value="PHOSPHOGLYCERATE KINASE"/>
    <property type="match status" value="1"/>
</dbReference>
<dbReference type="Pfam" id="PF00162">
    <property type="entry name" value="PGK"/>
    <property type="match status" value="1"/>
</dbReference>
<dbReference type="PIRSF" id="PIRSF000724">
    <property type="entry name" value="Pgk"/>
    <property type="match status" value="1"/>
</dbReference>
<dbReference type="PRINTS" id="PR00477">
    <property type="entry name" value="PHGLYCKINASE"/>
</dbReference>
<dbReference type="SUPFAM" id="SSF53748">
    <property type="entry name" value="Phosphoglycerate kinase"/>
    <property type="match status" value="1"/>
</dbReference>
<dbReference type="PROSITE" id="PS00111">
    <property type="entry name" value="PGLYCERATE_KINASE"/>
    <property type="match status" value="1"/>
</dbReference>
<proteinExistence type="inferred from homology"/>